<dbReference type="EC" id="3.6.5.2" evidence="2"/>
<dbReference type="EMBL" id="AF034098">
    <property type="protein sequence ID" value="AAD01987.1"/>
    <property type="molecule type" value="mRNA"/>
</dbReference>
<dbReference type="SMR" id="O93856"/>
<dbReference type="GO" id="GO:0005886">
    <property type="term" value="C:plasma membrane"/>
    <property type="evidence" value="ECO:0007669"/>
    <property type="project" value="UniProtKB-SubCell"/>
</dbReference>
<dbReference type="GO" id="GO:0003925">
    <property type="term" value="F:G protein activity"/>
    <property type="evidence" value="ECO:0007669"/>
    <property type="project" value="UniProtKB-EC"/>
</dbReference>
<dbReference type="GO" id="GO:0005525">
    <property type="term" value="F:GTP binding"/>
    <property type="evidence" value="ECO:0007669"/>
    <property type="project" value="UniProtKB-KW"/>
</dbReference>
<dbReference type="GO" id="GO:0007165">
    <property type="term" value="P:signal transduction"/>
    <property type="evidence" value="ECO:0007669"/>
    <property type="project" value="InterPro"/>
</dbReference>
<dbReference type="CDD" id="cd04138">
    <property type="entry name" value="H_N_K_Ras_like"/>
    <property type="match status" value="1"/>
</dbReference>
<dbReference type="FunFam" id="3.40.50.300:FF:000080">
    <property type="entry name" value="Ras-like GTPase Ras1"/>
    <property type="match status" value="1"/>
</dbReference>
<dbReference type="Gene3D" id="3.40.50.300">
    <property type="entry name" value="P-loop containing nucleotide triphosphate hydrolases"/>
    <property type="match status" value="1"/>
</dbReference>
<dbReference type="InterPro" id="IPR027417">
    <property type="entry name" value="P-loop_NTPase"/>
</dbReference>
<dbReference type="InterPro" id="IPR005225">
    <property type="entry name" value="Small_GTP-bd"/>
</dbReference>
<dbReference type="InterPro" id="IPR001806">
    <property type="entry name" value="Small_GTPase"/>
</dbReference>
<dbReference type="InterPro" id="IPR020849">
    <property type="entry name" value="Small_GTPase_Ras-type"/>
</dbReference>
<dbReference type="NCBIfam" id="TIGR00231">
    <property type="entry name" value="small_GTP"/>
    <property type="match status" value="1"/>
</dbReference>
<dbReference type="PANTHER" id="PTHR24070">
    <property type="entry name" value="RAS, DI-RAS, AND RHEB FAMILY MEMBERS OF SMALL GTPASE SUPERFAMILY"/>
    <property type="match status" value="1"/>
</dbReference>
<dbReference type="Pfam" id="PF00071">
    <property type="entry name" value="Ras"/>
    <property type="match status" value="1"/>
</dbReference>
<dbReference type="PRINTS" id="PR00449">
    <property type="entry name" value="RASTRNSFRMNG"/>
</dbReference>
<dbReference type="SMART" id="SM00175">
    <property type="entry name" value="RAB"/>
    <property type="match status" value="1"/>
</dbReference>
<dbReference type="SMART" id="SM00176">
    <property type="entry name" value="RAN"/>
    <property type="match status" value="1"/>
</dbReference>
<dbReference type="SMART" id="SM00173">
    <property type="entry name" value="RAS"/>
    <property type="match status" value="1"/>
</dbReference>
<dbReference type="SMART" id="SM00174">
    <property type="entry name" value="RHO"/>
    <property type="match status" value="1"/>
</dbReference>
<dbReference type="SUPFAM" id="SSF52540">
    <property type="entry name" value="P-loop containing nucleoside triphosphate hydrolases"/>
    <property type="match status" value="1"/>
</dbReference>
<dbReference type="PROSITE" id="PS51421">
    <property type="entry name" value="RAS"/>
    <property type="match status" value="1"/>
</dbReference>
<accession>O93856</accession>
<keyword id="KW-1003">Cell membrane</keyword>
<keyword id="KW-0342">GTP-binding</keyword>
<keyword id="KW-0378">Hydrolase</keyword>
<keyword id="KW-0449">Lipoprotein</keyword>
<keyword id="KW-0472">Membrane</keyword>
<keyword id="KW-0488">Methylation</keyword>
<keyword id="KW-0547">Nucleotide-binding</keyword>
<keyword id="KW-0564">Palmitate</keyword>
<keyword id="KW-0636">Prenylation</keyword>
<name>RAS_LACBI</name>
<proteinExistence type="evidence at transcript level"/>
<comment type="catalytic activity">
    <reaction evidence="2">
        <text>GTP + H2O = GDP + phosphate + H(+)</text>
        <dbReference type="Rhea" id="RHEA:19669"/>
        <dbReference type="ChEBI" id="CHEBI:15377"/>
        <dbReference type="ChEBI" id="CHEBI:15378"/>
        <dbReference type="ChEBI" id="CHEBI:37565"/>
        <dbReference type="ChEBI" id="CHEBI:43474"/>
        <dbReference type="ChEBI" id="CHEBI:58189"/>
        <dbReference type="EC" id="3.6.5.2"/>
    </reaction>
</comment>
<comment type="activity regulation">
    <text>Alternates between an inactive form bound to GDP and an active form bound to GTP. Activated by a guanine nucleotide-exchange factor (GEF) and inactivated by a GTPase-activating protein (GAP).</text>
</comment>
<comment type="subcellular location">
    <subcellularLocation>
        <location evidence="3">Cell membrane</location>
        <topology evidence="3">Lipid-anchor</topology>
        <orientation evidence="3">Cytoplasmic side</orientation>
    </subcellularLocation>
</comment>
<comment type="induction">
    <text>Expression is dependent upon interaction with host roots.</text>
</comment>
<comment type="similarity">
    <text evidence="3">Belongs to the small GTPase superfamily. Ras family.</text>
</comment>
<feature type="chain" id="PRO_0000082676" description="Ras-like protein">
    <location>
        <begin position="1"/>
        <end position="206"/>
    </location>
</feature>
<feature type="propeptide" id="PRO_0000281331" description="Removed in mature form" evidence="1">
    <location>
        <begin position="207"/>
        <end position="209"/>
    </location>
</feature>
<feature type="short sequence motif" description="Effector region">
    <location>
        <begin position="37"/>
        <end position="45"/>
    </location>
</feature>
<feature type="binding site" evidence="1">
    <location>
        <begin position="15"/>
        <end position="22"/>
    </location>
    <ligand>
        <name>GTP</name>
        <dbReference type="ChEBI" id="CHEBI:37565"/>
    </ligand>
</feature>
<feature type="binding site" evidence="1">
    <location>
        <begin position="62"/>
        <end position="66"/>
    </location>
    <ligand>
        <name>GTP</name>
        <dbReference type="ChEBI" id="CHEBI:37565"/>
    </ligand>
</feature>
<feature type="binding site" evidence="1">
    <location>
        <begin position="121"/>
        <end position="124"/>
    </location>
    <ligand>
        <name>GTP</name>
        <dbReference type="ChEBI" id="CHEBI:37565"/>
    </ligand>
</feature>
<feature type="modified residue" description="Cysteine methyl ester" evidence="1">
    <location>
        <position position="206"/>
    </location>
</feature>
<feature type="lipid moiety-binding region" description="S-palmitoyl cysteine" evidence="1">
    <location>
        <position position="202"/>
    </location>
</feature>
<feature type="lipid moiety-binding region" description="S-palmitoyl cysteine" evidence="1">
    <location>
        <position position="203"/>
    </location>
</feature>
<feature type="lipid moiety-binding region" description="S-geranylgeranyl cysteine" evidence="1">
    <location>
        <position position="206"/>
    </location>
</feature>
<evidence type="ECO:0000250" key="1"/>
<evidence type="ECO:0000250" key="2">
    <source>
        <dbReference type="UniProtKB" id="P01112"/>
    </source>
</evidence>
<evidence type="ECO:0000305" key="3"/>
<protein>
    <recommendedName>
        <fullName>Ras-like protein</fullName>
        <ecNumber evidence="2">3.6.5.2</ecNumber>
    </recommendedName>
</protein>
<reference key="1">
    <citation type="journal article" date="2001" name="Mol. Plant Microbe Interact.">
        <title>Isolation and characterization of a symbiosis-regulated ras from the ectomycorrhizal fungus Laccaria bicolor.</title>
        <authorList>
            <person name="Sundaram S."/>
            <person name="Kim S.J."/>
            <person name="Suzuki H."/>
            <person name="Mcquattie C.J."/>
            <person name="Hiremah S.T."/>
            <person name="Podila G.K."/>
        </authorList>
    </citation>
    <scope>NUCLEOTIDE SEQUENCE [MRNA]</scope>
    <source>
        <strain>DR170</strain>
    </source>
</reference>
<sequence>MASKFLREYKLVVVGGGGEGKSCLTIQLIQSHFVDEYDPTIEESYRKQCVIDDEVALLDVLDTAGQEEYSAMREQYMRTGEGFLLVYSITSRQSFEEIMTFQQQILRVKDKDYFPIIVVGNKCDLDKERVVSKQEGESLARQFGCKFIETSAKSRINVENAFYDLVREIRRYNKEMSNPSGFGARAPDSKMDVSEPGESAGCCGKCIVM</sequence>
<organism>
    <name type="scientific">Laccaria bicolor</name>
    <name type="common">Bicoloured deceiver</name>
    <name type="synonym">Laccaria laccata var. bicolor</name>
    <dbReference type="NCBI Taxonomy" id="29883"/>
    <lineage>
        <taxon>Eukaryota</taxon>
        <taxon>Fungi</taxon>
        <taxon>Dikarya</taxon>
        <taxon>Basidiomycota</taxon>
        <taxon>Agaricomycotina</taxon>
        <taxon>Agaricomycetes</taxon>
        <taxon>Agaricomycetidae</taxon>
        <taxon>Agaricales</taxon>
        <taxon>Agaricineae</taxon>
        <taxon>Hydnangiaceae</taxon>
        <taxon>Laccaria</taxon>
    </lineage>
</organism>